<gene>
    <name evidence="3" type="primary">SAMDC3</name>
    <name evidence="5" type="ordered locus">At3g25570</name>
    <name evidence="6" type="ORF">MWL2.23</name>
</gene>
<accession>Q9LSU6</accession>
<evidence type="ECO:0000250" key="1">
    <source>
        <dbReference type="UniProtKB" id="P17707"/>
    </source>
</evidence>
<evidence type="ECO:0000250" key="2">
    <source>
        <dbReference type="UniProtKB" id="Q96286"/>
    </source>
</evidence>
<evidence type="ECO:0000303" key="3">
    <source>
    </source>
</evidence>
<evidence type="ECO:0000305" key="4"/>
<evidence type="ECO:0000312" key="5">
    <source>
        <dbReference type="Araport" id="AT3G25570"/>
    </source>
</evidence>
<evidence type="ECO:0000312" key="6">
    <source>
        <dbReference type="EMBL" id="BAB01327.1"/>
    </source>
</evidence>
<keyword id="KW-0210">Decarboxylase</keyword>
<keyword id="KW-0456">Lyase</keyword>
<keyword id="KW-0620">Polyamine biosynthesis</keyword>
<keyword id="KW-0670">Pyruvate</keyword>
<keyword id="KW-1185">Reference proteome</keyword>
<keyword id="KW-0949">S-adenosyl-L-methionine</keyword>
<keyword id="KW-0704">Schiff base</keyword>
<keyword id="KW-0745">Spermidine biosynthesis</keyword>
<keyword id="KW-0865">Zymogen</keyword>
<sequence>MAVSATGFEGFEKRLEISFFETTDFLDPQGKSLRSLTKSQLDEILTPAECTIVSSLTNSFVDSYVLSESSLFVYPYKIIIKTCGTTKLLLSIPHILRLADSLCLTVKSVRYTRGSFIFPGAQSYPHRSFSEEVALLDDYFGKLNAGSKAFVMGGSDNNPQRWHVYSASSTEESAVCDKPVYTLEMCMTGLDNIKASVFFKTNSVSASEMTISSGIRNILPGSEICDFNFEPCGYSMNSIEGDAVSTIHVTPEDGFSYASFETVGYDLKALNFKELVDRVLVCFGPEEFSVAVHANLGTEVLASDCVADVNGYFSQERELEELGLGGSVLYQRFVKTVECCSPKSTLGFC</sequence>
<feature type="chain" id="PRO_0000430960" description="S-adenosylmethionine decarboxylase 1 beta chain" evidence="1">
    <location>
        <begin position="1"/>
        <end position="68"/>
    </location>
</feature>
<feature type="chain" id="PRO_0000430961" description="S-adenosylmethionine decarboxylase 1 alpha chain" evidence="1">
    <location>
        <begin position="69"/>
        <end position="349"/>
    </location>
</feature>
<feature type="active site" evidence="1">
    <location>
        <position position="9"/>
    </location>
</feature>
<feature type="active site" evidence="1">
    <location>
        <position position="12"/>
    </location>
</feature>
<feature type="active site" description="Schiff-base intermediate with substrate; via pyruvic acid" evidence="1">
    <location>
        <position position="69"/>
    </location>
</feature>
<feature type="active site" description="Proton donor; for catalytic activity" evidence="1">
    <location>
        <position position="83"/>
    </location>
</feature>
<feature type="active site" description="Proton acceptor; for processing activity" evidence="1">
    <location>
        <position position="235"/>
    </location>
</feature>
<feature type="active site" description="Proton acceptor; for processing activity" evidence="1">
    <location>
        <position position="248"/>
    </location>
</feature>
<feature type="binding site" evidence="1">
    <location>
        <position position="68"/>
    </location>
    <ligand>
        <name>substrate</name>
    </ligand>
</feature>
<feature type="binding site" evidence="1">
    <location>
        <position position="252"/>
    </location>
    <ligand>
        <name>substrate</name>
    </ligand>
</feature>
<feature type="site" description="Cleavage (non-hydrolytic); by autolysis" evidence="1">
    <location>
        <begin position="68"/>
        <end position="69"/>
    </location>
</feature>
<feature type="modified residue" description="Pyruvic acid (Ser); by autocatalysis" evidence="1">
    <location>
        <position position="69"/>
    </location>
</feature>
<protein>
    <recommendedName>
        <fullName evidence="4">S-adenosylmethionine decarboxylase proenzyme 3</fullName>
        <shortName evidence="4">AdoMetDC3</shortName>
        <ecNumber evidence="2">4.1.1.50</ecNumber>
    </recommendedName>
    <component>
        <recommendedName>
            <fullName evidence="1">S-adenosylmethionine decarboxylase 1 alpha chain</fullName>
        </recommendedName>
    </component>
    <component>
        <recommendedName>
            <fullName evidence="1">S-adenosylmethionine decarboxylase 1 beta chain</fullName>
        </recommendedName>
    </component>
</protein>
<name>DCAM3_ARATH</name>
<proteinExistence type="evidence at transcript level"/>
<reference key="1">
    <citation type="journal article" date="2000" name="DNA Res.">
        <title>Structural analysis of Arabidopsis thaliana chromosome 3. I. Sequence features of the regions of 4,504,864 bp covered by sixty P1 and TAC clones.</title>
        <authorList>
            <person name="Sato S."/>
            <person name="Nakamura Y."/>
            <person name="Kaneko T."/>
            <person name="Katoh T."/>
            <person name="Asamizu E."/>
            <person name="Tabata S."/>
        </authorList>
    </citation>
    <scope>NUCLEOTIDE SEQUENCE [LARGE SCALE GENOMIC DNA]</scope>
    <source>
        <strain>cv. Columbia</strain>
    </source>
</reference>
<reference key="2">
    <citation type="journal article" date="2017" name="Plant J.">
        <title>Araport11: a complete reannotation of the Arabidopsis thaliana reference genome.</title>
        <authorList>
            <person name="Cheng C.Y."/>
            <person name="Krishnakumar V."/>
            <person name="Chan A.P."/>
            <person name="Thibaud-Nissen F."/>
            <person name="Schobel S."/>
            <person name="Town C.D."/>
        </authorList>
    </citation>
    <scope>GENOME REANNOTATION</scope>
    <source>
        <strain>cv. Columbia</strain>
    </source>
</reference>
<reference key="3">
    <citation type="submission" date="2004-05" db="EMBL/GenBank/DDBJ databases">
        <title>Arabidopsis ORF clones.</title>
        <authorList>
            <person name="Cheuk R.F."/>
            <person name="Chen H."/>
            <person name="Kim C.J."/>
            <person name="Shinn P."/>
            <person name="Carninci P."/>
            <person name="Hayashizaki Y."/>
            <person name="Ishida J."/>
            <person name="Kamiya A."/>
            <person name="Kawai J."/>
            <person name="Narusaka M."/>
            <person name="Sakurai T."/>
            <person name="Satou M."/>
            <person name="Seki M."/>
            <person name="Shinozaki K."/>
            <person name="Ecker J.R."/>
        </authorList>
    </citation>
    <scope>NUCLEOTIDE SEQUENCE [LARGE SCALE MRNA]</scope>
    <source>
        <strain>cv. Columbia</strain>
    </source>
</reference>
<reference key="4">
    <citation type="journal article" date="2006" name="Cell Res.">
        <title>BUD2, encoding an S-adenosylmethionine decarboxylase, is required for Arabidopsis growth and development.</title>
        <authorList>
            <person name="Ge C."/>
            <person name="Cui X."/>
            <person name="Wang Y."/>
            <person name="Hu Y."/>
            <person name="Fu Z."/>
            <person name="Zhang D."/>
            <person name="Cheng Z."/>
            <person name="Li J."/>
        </authorList>
    </citation>
    <scope>GENE FAMILY</scope>
</reference>
<comment type="function">
    <text evidence="2">Essential for biosynthesis of the polyamines spermidine and spermine. Essential for polyamine homeostasis, and normal plant embryogenesis, growth and development.</text>
</comment>
<comment type="catalytic activity">
    <reaction evidence="2">
        <text>S-adenosyl-L-methionine + H(+) = S-adenosyl 3-(methylsulfanyl)propylamine + CO2</text>
        <dbReference type="Rhea" id="RHEA:15981"/>
        <dbReference type="ChEBI" id="CHEBI:15378"/>
        <dbReference type="ChEBI" id="CHEBI:16526"/>
        <dbReference type="ChEBI" id="CHEBI:57443"/>
        <dbReference type="ChEBI" id="CHEBI:59789"/>
        <dbReference type="EC" id="4.1.1.50"/>
    </reaction>
</comment>
<comment type="cofactor">
    <cofactor evidence="1">
        <name>pyruvate</name>
        <dbReference type="ChEBI" id="CHEBI:15361"/>
    </cofactor>
    <text evidence="1">Binds 1 pyruvoyl group covalently per subunit.</text>
</comment>
<comment type="pathway">
    <text evidence="4">Amine and polyamine biosynthesis; S-adenosylmethioninamine biosynthesis; S-adenosylmethioninamine from S-adenosyl-L-methionine: step 1/1.</text>
</comment>
<comment type="PTM">
    <text evidence="1">Is synthesized initially as an inactive proenzyme. Formation of the active enzyme involves a self-maturation process in which the active site pyruvoyl group is generated from an internal serine residue via an autocatalytic post-translational modification. Two non-identical subunits are generated from the proenzyme in this reaction, and the pyruvate is formed at the N-terminus of the alpha chain, which is derived from the carboxyl end of the proenzyme. The post-translation cleavage follows an unusual pathway, termed non-hydrolytic serinolysis, in which the side chain hydroxyl group of the serine supplies its oxygen atom to form the C-terminus of the beta chain, while the remainder of the serine residue undergoes an oxidative deamination to produce ammonia and the pyruvoyl group blocking the N-terminus of the alpha chain.</text>
</comment>
<comment type="similarity">
    <text evidence="4">Belongs to the eukaryotic AdoMetDC family.</text>
</comment>
<dbReference type="EC" id="4.1.1.50" evidence="2"/>
<dbReference type="EMBL" id="AB025639">
    <property type="protein sequence ID" value="BAB01327.1"/>
    <property type="molecule type" value="Genomic_DNA"/>
</dbReference>
<dbReference type="EMBL" id="CP002686">
    <property type="protein sequence ID" value="AEE77029.1"/>
    <property type="molecule type" value="Genomic_DNA"/>
</dbReference>
<dbReference type="EMBL" id="CP002686">
    <property type="protein sequence ID" value="AEE77030.1"/>
    <property type="molecule type" value="Genomic_DNA"/>
</dbReference>
<dbReference type="EMBL" id="BT012654">
    <property type="protein sequence ID" value="AAT06473.1"/>
    <property type="molecule type" value="mRNA"/>
</dbReference>
<dbReference type="RefSeq" id="NP_001189972.1">
    <property type="nucleotide sequence ID" value="NM_001203043.1"/>
</dbReference>
<dbReference type="RefSeq" id="NP_189184.1">
    <property type="nucleotide sequence ID" value="NM_113454.3"/>
</dbReference>
<dbReference type="SMR" id="Q9LSU6"/>
<dbReference type="FunCoup" id="Q9LSU6">
    <property type="interactions" value="2418"/>
</dbReference>
<dbReference type="STRING" id="3702.Q9LSU6"/>
<dbReference type="PaxDb" id="3702-AT3G25570.2"/>
<dbReference type="ProteomicsDB" id="224585"/>
<dbReference type="EnsemblPlants" id="AT3G25570.1">
    <property type="protein sequence ID" value="AT3G25570.1"/>
    <property type="gene ID" value="AT3G25570"/>
</dbReference>
<dbReference type="EnsemblPlants" id="AT3G25570.2">
    <property type="protein sequence ID" value="AT3G25570.2"/>
    <property type="gene ID" value="AT3G25570"/>
</dbReference>
<dbReference type="GeneID" id="822144"/>
<dbReference type="Gramene" id="AT3G25570.1">
    <property type="protein sequence ID" value="AT3G25570.1"/>
    <property type="gene ID" value="AT3G25570"/>
</dbReference>
<dbReference type="Gramene" id="AT3G25570.2">
    <property type="protein sequence ID" value="AT3G25570.2"/>
    <property type="gene ID" value="AT3G25570"/>
</dbReference>
<dbReference type="KEGG" id="ath:AT3G25570"/>
<dbReference type="Araport" id="AT3G25570"/>
<dbReference type="TAIR" id="AT3G25570">
    <property type="gene designation" value="SAMDC3"/>
</dbReference>
<dbReference type="eggNOG" id="KOG0788">
    <property type="taxonomic scope" value="Eukaryota"/>
</dbReference>
<dbReference type="HOGENOM" id="CLU_023050_2_1_1"/>
<dbReference type="InParanoid" id="Q9LSU6"/>
<dbReference type="OMA" id="ECTIVSY"/>
<dbReference type="PhylomeDB" id="Q9LSU6"/>
<dbReference type="BioCyc" id="ARA:AT3G25570-MONOMER"/>
<dbReference type="UniPathway" id="UPA00331">
    <property type="reaction ID" value="UER00451"/>
</dbReference>
<dbReference type="PRO" id="PR:Q9LSU6"/>
<dbReference type="Proteomes" id="UP000006548">
    <property type="component" value="Chromosome 3"/>
</dbReference>
<dbReference type="ExpressionAtlas" id="Q9LSU6">
    <property type="expression patterns" value="baseline and differential"/>
</dbReference>
<dbReference type="GO" id="GO:0004014">
    <property type="term" value="F:adenosylmethionine decarboxylase activity"/>
    <property type="evidence" value="ECO:0007669"/>
    <property type="project" value="UniProtKB-EC"/>
</dbReference>
<dbReference type="GO" id="GO:0008295">
    <property type="term" value="P:spermidine biosynthetic process"/>
    <property type="evidence" value="ECO:0007669"/>
    <property type="project" value="UniProtKB-KW"/>
</dbReference>
<dbReference type="GO" id="GO:0006597">
    <property type="term" value="P:spermine biosynthetic process"/>
    <property type="evidence" value="ECO:0007669"/>
    <property type="project" value="InterPro"/>
</dbReference>
<dbReference type="FunFam" id="3.30.360.50:FF:000001">
    <property type="entry name" value="S-adenosylmethionine decarboxylase proenzyme"/>
    <property type="match status" value="1"/>
</dbReference>
<dbReference type="FunFam" id="3.60.90.10:FF:000002">
    <property type="entry name" value="S-adenosylmethionine decarboxylase proenzyme"/>
    <property type="match status" value="1"/>
</dbReference>
<dbReference type="Gene3D" id="3.30.360.50">
    <property type="entry name" value="S-adenosylmethionine decarboxylase"/>
    <property type="match status" value="1"/>
</dbReference>
<dbReference type="Gene3D" id="3.60.90.10">
    <property type="entry name" value="S-adenosylmethionine decarboxylase"/>
    <property type="match status" value="1"/>
</dbReference>
<dbReference type="InterPro" id="IPR048283">
    <property type="entry name" value="AdoMetDC-like"/>
</dbReference>
<dbReference type="InterPro" id="IPR001985">
    <property type="entry name" value="S-AdoMet_decarboxylase_euk"/>
</dbReference>
<dbReference type="InterPro" id="IPR016067">
    <property type="entry name" value="S-AdoMet_deCO2ase_core"/>
</dbReference>
<dbReference type="InterPro" id="IPR018166">
    <property type="entry name" value="S-AdoMet_deCO2ase_CS"/>
</dbReference>
<dbReference type="NCBIfam" id="TIGR00535">
    <property type="entry name" value="SAM_DCase"/>
    <property type="match status" value="1"/>
</dbReference>
<dbReference type="PANTHER" id="PTHR11570">
    <property type="entry name" value="S-ADENOSYLMETHIONINE DECARBOXYLASE"/>
    <property type="match status" value="1"/>
</dbReference>
<dbReference type="PANTHER" id="PTHR11570:SF15">
    <property type="entry name" value="S-ADENOSYLMETHIONINE DECARBOXYLASE PROENZYME 3"/>
    <property type="match status" value="1"/>
</dbReference>
<dbReference type="Pfam" id="PF01536">
    <property type="entry name" value="SAM_decarbox"/>
    <property type="match status" value="1"/>
</dbReference>
<dbReference type="PIRSF" id="PIRSF001355">
    <property type="entry name" value="S-AdenosylMet_decarboxylase"/>
    <property type="match status" value="1"/>
</dbReference>
<dbReference type="SUPFAM" id="SSF56276">
    <property type="entry name" value="S-adenosylmethionine decarboxylase"/>
    <property type="match status" value="1"/>
</dbReference>
<dbReference type="PROSITE" id="PS01336">
    <property type="entry name" value="ADOMETDC"/>
    <property type="match status" value="1"/>
</dbReference>
<organism>
    <name type="scientific">Arabidopsis thaliana</name>
    <name type="common">Mouse-ear cress</name>
    <dbReference type="NCBI Taxonomy" id="3702"/>
    <lineage>
        <taxon>Eukaryota</taxon>
        <taxon>Viridiplantae</taxon>
        <taxon>Streptophyta</taxon>
        <taxon>Embryophyta</taxon>
        <taxon>Tracheophyta</taxon>
        <taxon>Spermatophyta</taxon>
        <taxon>Magnoliopsida</taxon>
        <taxon>eudicotyledons</taxon>
        <taxon>Gunneridae</taxon>
        <taxon>Pentapetalae</taxon>
        <taxon>rosids</taxon>
        <taxon>malvids</taxon>
        <taxon>Brassicales</taxon>
        <taxon>Brassicaceae</taxon>
        <taxon>Camelineae</taxon>
        <taxon>Arabidopsis</taxon>
    </lineage>
</organism>